<evidence type="ECO:0000255" key="1">
    <source>
        <dbReference type="HAMAP-Rule" id="MF_01001"/>
    </source>
</evidence>
<gene>
    <name evidence="1" type="primary">wecG</name>
    <name evidence="1" type="synonym">rffM</name>
    <name type="ordered locus">YpAngola_A0523</name>
</gene>
<name>WECG_YERPG</name>
<proteinExistence type="inferred from homology"/>
<feature type="chain" id="PRO_1000134592" description="UDP-N-acetyl-D-mannosaminuronic acid transferase">
    <location>
        <begin position="1"/>
        <end position="246"/>
    </location>
</feature>
<protein>
    <recommendedName>
        <fullName evidence="1">UDP-N-acetyl-D-mannosaminuronic acid transferase</fullName>
        <shortName evidence="1">UDP-ManNAcA transferase</shortName>
        <ecNumber evidence="1">2.4.1.180</ecNumber>
    </recommendedName>
</protein>
<organism>
    <name type="scientific">Yersinia pestis bv. Antiqua (strain Angola)</name>
    <dbReference type="NCBI Taxonomy" id="349746"/>
    <lineage>
        <taxon>Bacteria</taxon>
        <taxon>Pseudomonadati</taxon>
        <taxon>Pseudomonadota</taxon>
        <taxon>Gammaproteobacteria</taxon>
        <taxon>Enterobacterales</taxon>
        <taxon>Yersiniaceae</taxon>
        <taxon>Yersinia</taxon>
    </lineage>
</organism>
<reference key="1">
    <citation type="journal article" date="2010" name="J. Bacteriol.">
        <title>Genome sequence of the deep-rooted Yersinia pestis strain Angola reveals new insights into the evolution and pangenome of the plague bacterium.</title>
        <authorList>
            <person name="Eppinger M."/>
            <person name="Worsham P.L."/>
            <person name="Nikolich M.P."/>
            <person name="Riley D.R."/>
            <person name="Sebastian Y."/>
            <person name="Mou S."/>
            <person name="Achtman M."/>
            <person name="Lindler L.E."/>
            <person name="Ravel J."/>
        </authorList>
    </citation>
    <scope>NUCLEOTIDE SEQUENCE [LARGE SCALE GENOMIC DNA]</scope>
    <source>
        <strain>Angola</strain>
    </source>
</reference>
<dbReference type="EC" id="2.4.1.180" evidence="1"/>
<dbReference type="EMBL" id="CP000901">
    <property type="protein sequence ID" value="ABX85007.1"/>
    <property type="molecule type" value="Genomic_DNA"/>
</dbReference>
<dbReference type="RefSeq" id="WP_002211977.1">
    <property type="nucleotide sequence ID" value="NZ_CP009935.1"/>
</dbReference>
<dbReference type="SMR" id="A9R8J1"/>
<dbReference type="CAZy" id="GT26">
    <property type="family name" value="Glycosyltransferase Family 26"/>
</dbReference>
<dbReference type="GeneID" id="57974848"/>
<dbReference type="KEGG" id="ypg:YpAngola_A0523"/>
<dbReference type="PATRIC" id="fig|349746.12.peg.1473"/>
<dbReference type="UniPathway" id="UPA00566"/>
<dbReference type="GO" id="GO:0047241">
    <property type="term" value="F:lipopolysaccharide N-acetylmannosaminouronosyltransferase activity"/>
    <property type="evidence" value="ECO:0007669"/>
    <property type="project" value="UniProtKB-UniRule"/>
</dbReference>
<dbReference type="GO" id="GO:0009246">
    <property type="term" value="P:enterobacterial common antigen biosynthetic process"/>
    <property type="evidence" value="ECO:0007669"/>
    <property type="project" value="UniProtKB-UniRule"/>
</dbReference>
<dbReference type="CDD" id="cd06533">
    <property type="entry name" value="Glyco_transf_WecG_TagA"/>
    <property type="match status" value="1"/>
</dbReference>
<dbReference type="HAMAP" id="MF_01001">
    <property type="entry name" value="WecG_RffM"/>
    <property type="match status" value="1"/>
</dbReference>
<dbReference type="InterPro" id="IPR023085">
    <property type="entry name" value="UDP-ManNAcA_Trfase_WecG"/>
</dbReference>
<dbReference type="InterPro" id="IPR004629">
    <property type="entry name" value="WecG_TagA_CpsF"/>
</dbReference>
<dbReference type="NCBIfam" id="NF002980">
    <property type="entry name" value="PRK03692.1"/>
    <property type="match status" value="1"/>
</dbReference>
<dbReference type="NCBIfam" id="TIGR00696">
    <property type="entry name" value="wecG_tagA_cpsF"/>
    <property type="match status" value="1"/>
</dbReference>
<dbReference type="PANTHER" id="PTHR34136">
    <property type="match status" value="1"/>
</dbReference>
<dbReference type="PANTHER" id="PTHR34136:SF1">
    <property type="entry name" value="UDP-N-ACETYL-D-MANNOSAMINURONIC ACID TRANSFERASE"/>
    <property type="match status" value="1"/>
</dbReference>
<dbReference type="Pfam" id="PF03808">
    <property type="entry name" value="Glyco_tran_WecG"/>
    <property type="match status" value="1"/>
</dbReference>
<sequence>MEPNTVIPKYNVRGFEIWGFRDMAQVLDHLLGSGPVKTGTLVAMNAEKLLKAEDDTALCELIKNAEYLYADGISMVRAIRRKYPQAELSRVAGADLWEALMQRAGQQGTPVFLVGGKPDVLAETEAKLRAQWNVNLVGSQDGYFTPEQREALFARIAASGAAIVTVAMGSPKQEIFMRDCRKFYPDALYMGVGGTYDVFTSHVKRAPKIWQNMGLEWLYRLLAQPSRIRRQLKLLKFVGYYYSGRL</sequence>
<comment type="function">
    <text evidence="1">Catalyzes the synthesis of Und-PP-GlcNAc-ManNAcA (Lipid II), the second lipid-linked intermediate involved in enterobacterial common antigen (ECA) synthesis.</text>
</comment>
<comment type="catalytic activity">
    <reaction evidence="1">
        <text>UDP-N-acetyl-alpha-D-mannosaminouronate + N-acetyl-alpha-D-glucosaminyl-di-trans,octa-cis-undecaprenyl diphosphate = beta-D-ManNAcA-(1-&gt;4)-alpha-D-GlcNAc-di-trans,octa-cis-undecaprenyl diphosphate + UDP + H(+)</text>
        <dbReference type="Rhea" id="RHEA:28366"/>
        <dbReference type="ChEBI" id="CHEBI:15378"/>
        <dbReference type="ChEBI" id="CHEBI:58223"/>
        <dbReference type="ChEBI" id="CHEBI:61495"/>
        <dbReference type="ChEBI" id="CHEBI:62959"/>
        <dbReference type="ChEBI" id="CHEBI:70731"/>
        <dbReference type="EC" id="2.4.1.180"/>
    </reaction>
</comment>
<comment type="pathway">
    <text evidence="1">Bacterial outer membrane biogenesis; enterobacterial common antigen biosynthesis.</text>
</comment>
<comment type="similarity">
    <text evidence="1">Belongs to the glycosyltransferase 26 family.</text>
</comment>
<keyword id="KW-0328">Glycosyltransferase</keyword>
<keyword id="KW-0808">Transferase</keyword>
<accession>A9R8J1</accession>